<gene>
    <name evidence="1" type="primary">tusA</name>
    <name type="ordered locus">ECSE_3738</name>
</gene>
<name>TUSA_ECOSE</name>
<organism>
    <name type="scientific">Escherichia coli (strain SE11)</name>
    <dbReference type="NCBI Taxonomy" id="409438"/>
    <lineage>
        <taxon>Bacteria</taxon>
        <taxon>Pseudomonadati</taxon>
        <taxon>Pseudomonadota</taxon>
        <taxon>Gammaproteobacteria</taxon>
        <taxon>Enterobacterales</taxon>
        <taxon>Enterobacteriaceae</taxon>
        <taxon>Escherichia</taxon>
    </lineage>
</organism>
<sequence length="81" mass="9095">MTDLFSSPDHTLDALGLRCPEPVMMVRKTVRNMQPGETLLIIADDPATTRDIPGFCTFMEHELVAKETDGLPYRYLIRKGG</sequence>
<accession>B6I335</accession>
<feature type="chain" id="PRO_1000199913" description="Sulfur carrier protein TusA">
    <location>
        <begin position="1"/>
        <end position="81"/>
    </location>
</feature>
<feature type="active site" description="Cysteine persulfide intermediate" evidence="1">
    <location>
        <position position="19"/>
    </location>
</feature>
<keyword id="KW-0963">Cytoplasm</keyword>
<keyword id="KW-0819">tRNA processing</keyword>
<reference key="1">
    <citation type="journal article" date="2008" name="DNA Res.">
        <title>Complete genome sequence and comparative analysis of the wild-type commensal Escherichia coli strain SE11 isolated from a healthy adult.</title>
        <authorList>
            <person name="Oshima K."/>
            <person name="Toh H."/>
            <person name="Ogura Y."/>
            <person name="Sasamoto H."/>
            <person name="Morita H."/>
            <person name="Park S.-H."/>
            <person name="Ooka T."/>
            <person name="Iyoda S."/>
            <person name="Taylor T.D."/>
            <person name="Hayashi T."/>
            <person name="Itoh K."/>
            <person name="Hattori M."/>
        </authorList>
    </citation>
    <scope>NUCLEOTIDE SEQUENCE [LARGE SCALE GENOMIC DNA]</scope>
    <source>
        <strain>SE11</strain>
    </source>
</reference>
<evidence type="ECO:0000255" key="1">
    <source>
        <dbReference type="HAMAP-Rule" id="MF_00413"/>
    </source>
</evidence>
<proteinExistence type="inferred from homology"/>
<protein>
    <recommendedName>
        <fullName evidence="1">Sulfur carrier protein TusA</fullName>
    </recommendedName>
    <alternativeName>
        <fullName evidence="1">Sulfur mediator TusA</fullName>
    </alternativeName>
    <alternativeName>
        <fullName evidence="1">Sulfur transfer protein TusA</fullName>
    </alternativeName>
    <alternativeName>
        <fullName evidence="1">tRNA 2-thiouridine synthesizing protein A</fullName>
    </alternativeName>
</protein>
<dbReference type="EMBL" id="AP009240">
    <property type="protein sequence ID" value="BAG79262.1"/>
    <property type="molecule type" value="Genomic_DNA"/>
</dbReference>
<dbReference type="RefSeq" id="WP_000130621.1">
    <property type="nucleotide sequence ID" value="NC_011415.1"/>
</dbReference>
<dbReference type="SMR" id="B6I335"/>
<dbReference type="GeneID" id="93778521"/>
<dbReference type="KEGG" id="ecy:ECSE_3738"/>
<dbReference type="HOGENOM" id="CLU_165255_5_0_6"/>
<dbReference type="Proteomes" id="UP000008199">
    <property type="component" value="Chromosome"/>
</dbReference>
<dbReference type="GO" id="GO:0005737">
    <property type="term" value="C:cytoplasm"/>
    <property type="evidence" value="ECO:0007669"/>
    <property type="project" value="UniProtKB-SubCell"/>
</dbReference>
<dbReference type="GO" id="GO:0097163">
    <property type="term" value="F:sulfur carrier activity"/>
    <property type="evidence" value="ECO:0007669"/>
    <property type="project" value="UniProtKB-UniRule"/>
</dbReference>
<dbReference type="GO" id="GO:0002143">
    <property type="term" value="P:tRNA wobble position uridine thiolation"/>
    <property type="evidence" value="ECO:0007669"/>
    <property type="project" value="InterPro"/>
</dbReference>
<dbReference type="CDD" id="cd03423">
    <property type="entry name" value="SirA"/>
    <property type="match status" value="1"/>
</dbReference>
<dbReference type="FunFam" id="3.30.110.40:FF:000002">
    <property type="entry name" value="Sulfur carrier protein TusA"/>
    <property type="match status" value="1"/>
</dbReference>
<dbReference type="Gene3D" id="3.30.110.40">
    <property type="entry name" value="TusA-like domain"/>
    <property type="match status" value="1"/>
</dbReference>
<dbReference type="HAMAP" id="MF_00413">
    <property type="entry name" value="Thiourid_synth_A"/>
    <property type="match status" value="1"/>
</dbReference>
<dbReference type="InterPro" id="IPR022931">
    <property type="entry name" value="Sulphur_carrier_TusA"/>
</dbReference>
<dbReference type="InterPro" id="IPR001455">
    <property type="entry name" value="TusA-like"/>
</dbReference>
<dbReference type="InterPro" id="IPR036868">
    <property type="entry name" value="TusA-like_sf"/>
</dbReference>
<dbReference type="NCBIfam" id="NF001423">
    <property type="entry name" value="PRK00299.1"/>
    <property type="match status" value="1"/>
</dbReference>
<dbReference type="PANTHER" id="PTHR33279:SF2">
    <property type="entry name" value="SULFUR CARRIER PROTEIN TUSA"/>
    <property type="match status" value="1"/>
</dbReference>
<dbReference type="PANTHER" id="PTHR33279">
    <property type="entry name" value="SULFUR CARRIER PROTEIN YEDF-RELATED"/>
    <property type="match status" value="1"/>
</dbReference>
<dbReference type="Pfam" id="PF01206">
    <property type="entry name" value="TusA"/>
    <property type="match status" value="1"/>
</dbReference>
<dbReference type="SUPFAM" id="SSF64307">
    <property type="entry name" value="SirA-like"/>
    <property type="match status" value="1"/>
</dbReference>
<dbReference type="PROSITE" id="PS01148">
    <property type="entry name" value="UPF0033"/>
    <property type="match status" value="1"/>
</dbReference>
<comment type="function">
    <text evidence="1">Sulfur carrier protein involved in sulfur trafficking in the cell. Part of a sulfur-relay system required for 2-thiolation during synthesis of 2-thiouridine of the modified wobble base 5-methylaminomethyl-2-thiouridine (mnm(5)s(2)U) in tRNA. Interacts with IscS and stimulates its cysteine desulfurase activity. Accepts an activated sulfur from IscS, which is then transferred to TusD, and thus determines the direction of sulfur flow from IscS to 2-thiouridine formation. Also appears to be involved in sulfur transfer for the biosynthesis of molybdopterin.</text>
</comment>
<comment type="pathway">
    <text evidence="1">tRNA modification.</text>
</comment>
<comment type="subunit">
    <text evidence="1">Interacts with IscS.</text>
</comment>
<comment type="subcellular location">
    <subcellularLocation>
        <location evidence="1">Cytoplasm</location>
    </subcellularLocation>
</comment>
<comment type="similarity">
    <text evidence="1">Belongs to the sulfur carrier protein TusA family.</text>
</comment>